<keyword id="KW-0030">Aminoacyl-tRNA synthetase</keyword>
<keyword id="KW-0067">ATP-binding</keyword>
<keyword id="KW-0963">Cytoplasm</keyword>
<keyword id="KW-0436">Ligase</keyword>
<keyword id="KW-0547">Nucleotide-binding</keyword>
<keyword id="KW-0648">Protein biosynthesis</keyword>
<evidence type="ECO:0000255" key="1">
    <source>
        <dbReference type="HAMAP-Rule" id="MF_00254"/>
    </source>
</evidence>
<dbReference type="EC" id="6.1.1.14" evidence="1"/>
<dbReference type="EMBL" id="CP000668">
    <property type="protein sequence ID" value="ABP38449.1"/>
    <property type="molecule type" value="Genomic_DNA"/>
</dbReference>
<dbReference type="RefSeq" id="WP_002209624.1">
    <property type="nucleotide sequence ID" value="NZ_CP009715.1"/>
</dbReference>
<dbReference type="SMR" id="A4TGN6"/>
<dbReference type="GeneID" id="96663419"/>
<dbReference type="KEGG" id="ypp:YPDSF_0022"/>
<dbReference type="PATRIC" id="fig|386656.14.peg.554"/>
<dbReference type="GO" id="GO:0005829">
    <property type="term" value="C:cytosol"/>
    <property type="evidence" value="ECO:0007669"/>
    <property type="project" value="TreeGrafter"/>
</dbReference>
<dbReference type="GO" id="GO:0005524">
    <property type="term" value="F:ATP binding"/>
    <property type="evidence" value="ECO:0007669"/>
    <property type="project" value="UniProtKB-UniRule"/>
</dbReference>
<dbReference type="GO" id="GO:0004820">
    <property type="term" value="F:glycine-tRNA ligase activity"/>
    <property type="evidence" value="ECO:0007669"/>
    <property type="project" value="UniProtKB-UniRule"/>
</dbReference>
<dbReference type="GO" id="GO:0006426">
    <property type="term" value="P:glycyl-tRNA aminoacylation"/>
    <property type="evidence" value="ECO:0007669"/>
    <property type="project" value="UniProtKB-UniRule"/>
</dbReference>
<dbReference type="CDD" id="cd00733">
    <property type="entry name" value="GlyRS_alpha_core"/>
    <property type="match status" value="1"/>
</dbReference>
<dbReference type="FunFam" id="1.20.58.180:FF:000001">
    <property type="entry name" value="Glycine--tRNA ligase alpha subunit"/>
    <property type="match status" value="1"/>
</dbReference>
<dbReference type="FunFam" id="3.30.930.10:FF:000006">
    <property type="entry name" value="Glycine--tRNA ligase alpha subunit"/>
    <property type="match status" value="1"/>
</dbReference>
<dbReference type="Gene3D" id="3.30.930.10">
    <property type="entry name" value="Bira Bifunctional Protein, Domain 2"/>
    <property type="match status" value="1"/>
</dbReference>
<dbReference type="Gene3D" id="1.20.58.180">
    <property type="entry name" value="Class II aaRS and biotin synthetases, domain 2"/>
    <property type="match status" value="1"/>
</dbReference>
<dbReference type="HAMAP" id="MF_00254">
    <property type="entry name" value="Gly_tRNA_synth_alpha"/>
    <property type="match status" value="1"/>
</dbReference>
<dbReference type="InterPro" id="IPR045864">
    <property type="entry name" value="aa-tRNA-synth_II/BPL/LPL"/>
</dbReference>
<dbReference type="InterPro" id="IPR006194">
    <property type="entry name" value="Gly-tRNA-synth_heterodimer"/>
</dbReference>
<dbReference type="InterPro" id="IPR002310">
    <property type="entry name" value="Gly-tRNA_ligase_asu"/>
</dbReference>
<dbReference type="NCBIfam" id="TIGR00388">
    <property type="entry name" value="glyQ"/>
    <property type="match status" value="1"/>
</dbReference>
<dbReference type="NCBIfam" id="NF006827">
    <property type="entry name" value="PRK09348.1"/>
    <property type="match status" value="1"/>
</dbReference>
<dbReference type="PANTHER" id="PTHR30075:SF2">
    <property type="entry name" value="GLYCINE--TRNA LIGASE, CHLOROPLASTIC_MITOCHONDRIAL 2"/>
    <property type="match status" value="1"/>
</dbReference>
<dbReference type="PANTHER" id="PTHR30075">
    <property type="entry name" value="GLYCYL-TRNA SYNTHETASE"/>
    <property type="match status" value="1"/>
</dbReference>
<dbReference type="Pfam" id="PF02091">
    <property type="entry name" value="tRNA-synt_2e"/>
    <property type="match status" value="1"/>
</dbReference>
<dbReference type="PRINTS" id="PR01044">
    <property type="entry name" value="TRNASYNTHGA"/>
</dbReference>
<dbReference type="SUPFAM" id="SSF55681">
    <property type="entry name" value="Class II aaRS and biotin synthetases"/>
    <property type="match status" value="1"/>
</dbReference>
<dbReference type="PROSITE" id="PS50861">
    <property type="entry name" value="AA_TRNA_LIGASE_II_GLYAB"/>
    <property type="match status" value="1"/>
</dbReference>
<sequence length="304" mass="34758">MQKFDTKTFQGLILTLQDYWARQGCTIVQPLDMEVGAGTSHPMTCLRAIGPEPIAAAYVQPSRRPTDGRYGENPNRLQHYYQFQVIIKPSPDNIQELYLGSLKELGLDPTIHDIRFVEDNWENPTLGAWGLGWEVWLNGMEVTQFTYFQQVGGLECKPVTGEITYGLERLAMYIQGVDSVYDLIWCDGPLGTTTYGDIYHQNEVEQSTYNFEYADVDFLFSCFEQYEKEAQSLLALETPLPLPAYERILKAGHTFNLLDARKAISVTERQRYILRIRTLTKAVAEAYYASREALGFPMCKKNQN</sequence>
<reference key="1">
    <citation type="submission" date="2007-02" db="EMBL/GenBank/DDBJ databases">
        <title>Complete sequence of chromosome of Yersinia pestis Pestoides F.</title>
        <authorList>
            <consortium name="US DOE Joint Genome Institute"/>
            <person name="Copeland A."/>
            <person name="Lucas S."/>
            <person name="Lapidus A."/>
            <person name="Barry K."/>
            <person name="Detter J.C."/>
            <person name="Glavina del Rio T."/>
            <person name="Hammon N."/>
            <person name="Israni S."/>
            <person name="Dalin E."/>
            <person name="Tice H."/>
            <person name="Pitluck S."/>
            <person name="Di Bartolo G."/>
            <person name="Chain P."/>
            <person name="Malfatti S."/>
            <person name="Shin M."/>
            <person name="Vergez L."/>
            <person name="Schmutz J."/>
            <person name="Larimer F."/>
            <person name="Land M."/>
            <person name="Hauser L."/>
            <person name="Worsham P."/>
            <person name="Chu M."/>
            <person name="Bearden S."/>
            <person name="Garcia E."/>
            <person name="Richardson P."/>
        </authorList>
    </citation>
    <scope>NUCLEOTIDE SEQUENCE [LARGE SCALE GENOMIC DNA]</scope>
    <source>
        <strain>Pestoides F</strain>
    </source>
</reference>
<gene>
    <name evidence="1" type="primary">glyQ</name>
    <name type="ordered locus">YPDSF_0022</name>
</gene>
<accession>A4TGN6</accession>
<organism>
    <name type="scientific">Yersinia pestis (strain Pestoides F)</name>
    <dbReference type="NCBI Taxonomy" id="386656"/>
    <lineage>
        <taxon>Bacteria</taxon>
        <taxon>Pseudomonadati</taxon>
        <taxon>Pseudomonadota</taxon>
        <taxon>Gammaproteobacteria</taxon>
        <taxon>Enterobacterales</taxon>
        <taxon>Yersiniaceae</taxon>
        <taxon>Yersinia</taxon>
    </lineage>
</organism>
<comment type="catalytic activity">
    <reaction evidence="1">
        <text>tRNA(Gly) + glycine + ATP = glycyl-tRNA(Gly) + AMP + diphosphate</text>
        <dbReference type="Rhea" id="RHEA:16013"/>
        <dbReference type="Rhea" id="RHEA-COMP:9664"/>
        <dbReference type="Rhea" id="RHEA-COMP:9683"/>
        <dbReference type="ChEBI" id="CHEBI:30616"/>
        <dbReference type="ChEBI" id="CHEBI:33019"/>
        <dbReference type="ChEBI" id="CHEBI:57305"/>
        <dbReference type="ChEBI" id="CHEBI:78442"/>
        <dbReference type="ChEBI" id="CHEBI:78522"/>
        <dbReference type="ChEBI" id="CHEBI:456215"/>
        <dbReference type="EC" id="6.1.1.14"/>
    </reaction>
</comment>
<comment type="subunit">
    <text evidence="1">Tetramer of two alpha and two beta subunits.</text>
</comment>
<comment type="subcellular location">
    <subcellularLocation>
        <location evidence="1">Cytoplasm</location>
    </subcellularLocation>
</comment>
<comment type="similarity">
    <text evidence="1">Belongs to the class-II aminoacyl-tRNA synthetase family.</text>
</comment>
<protein>
    <recommendedName>
        <fullName evidence="1">Glycine--tRNA ligase alpha subunit</fullName>
        <ecNumber evidence="1">6.1.1.14</ecNumber>
    </recommendedName>
    <alternativeName>
        <fullName evidence="1">Glycyl-tRNA synthetase alpha subunit</fullName>
        <shortName evidence="1">GlyRS</shortName>
    </alternativeName>
</protein>
<proteinExistence type="inferred from homology"/>
<name>SYGA_YERPP</name>
<feature type="chain" id="PRO_1000047535" description="Glycine--tRNA ligase alpha subunit">
    <location>
        <begin position="1"/>
        <end position="304"/>
    </location>
</feature>